<sequence>MKKRRSKKERQELLQQTIETNPFITDEDLAEKFQVSIQTVRLDRMELSIPELRERIKHVATKQHEEDVKSLPLEEVVGEIIDIELDRHAISIFEVKVEHVFKRNQIARGHHLFAQANSLAVAVIDEELALTAKSTIRYIRPVKLGERVVAKARVEDVENDKGRTVVKVRSFVGEELVFTGTFEMYRSSNYSEEGNNL</sequence>
<feature type="chain" id="PRO_1000187829" description="Transcription factor FapR">
    <location>
        <begin position="1"/>
        <end position="197"/>
    </location>
</feature>
<gene>
    <name evidence="1" type="primary">fapR</name>
    <name type="ordered locus">BCAH820_3868</name>
</gene>
<proteinExistence type="inferred from homology"/>
<name>FAPR_BACC0</name>
<reference key="1">
    <citation type="submission" date="2008-10" db="EMBL/GenBank/DDBJ databases">
        <title>Genome sequence of Bacillus cereus AH820.</title>
        <authorList>
            <person name="Dodson R.J."/>
            <person name="Durkin A.S."/>
            <person name="Rosovitz M.J."/>
            <person name="Rasko D.A."/>
            <person name="Hoffmaster A."/>
            <person name="Ravel J."/>
            <person name="Sutton G."/>
        </authorList>
    </citation>
    <scope>NUCLEOTIDE SEQUENCE [LARGE SCALE GENOMIC DNA]</scope>
    <source>
        <strain>AH820</strain>
    </source>
</reference>
<protein>
    <recommendedName>
        <fullName evidence="1">Transcription factor FapR</fullName>
    </recommendedName>
    <alternativeName>
        <fullName evidence="1">Fatty acid and phospholipid biosynthesis regulator</fullName>
    </alternativeName>
</protein>
<accession>B7JJU1</accession>
<organism>
    <name type="scientific">Bacillus cereus (strain AH820)</name>
    <dbReference type="NCBI Taxonomy" id="405535"/>
    <lineage>
        <taxon>Bacteria</taxon>
        <taxon>Bacillati</taxon>
        <taxon>Bacillota</taxon>
        <taxon>Bacilli</taxon>
        <taxon>Bacillales</taxon>
        <taxon>Bacillaceae</taxon>
        <taxon>Bacillus</taxon>
        <taxon>Bacillus cereus group</taxon>
    </lineage>
</organism>
<evidence type="ECO:0000255" key="1">
    <source>
        <dbReference type="HAMAP-Rule" id="MF_01814"/>
    </source>
</evidence>
<dbReference type="EMBL" id="CP001283">
    <property type="protein sequence ID" value="ACK92468.1"/>
    <property type="molecule type" value="Genomic_DNA"/>
</dbReference>
<dbReference type="RefSeq" id="WP_000747352.1">
    <property type="nucleotide sequence ID" value="NC_011773.1"/>
</dbReference>
<dbReference type="SMR" id="B7JJU1"/>
<dbReference type="GeneID" id="93007258"/>
<dbReference type="KEGG" id="bcu:BCAH820_3868"/>
<dbReference type="HOGENOM" id="CLU_095708_0_0_9"/>
<dbReference type="Proteomes" id="UP000001363">
    <property type="component" value="Chromosome"/>
</dbReference>
<dbReference type="GO" id="GO:0003677">
    <property type="term" value="F:DNA binding"/>
    <property type="evidence" value="ECO:0007669"/>
    <property type="project" value="UniProtKB-KW"/>
</dbReference>
<dbReference type="GO" id="GO:0003700">
    <property type="term" value="F:DNA-binding transcription factor activity"/>
    <property type="evidence" value="ECO:0007669"/>
    <property type="project" value="UniProtKB-UniRule"/>
</dbReference>
<dbReference type="GO" id="GO:0006633">
    <property type="term" value="P:fatty acid biosynthetic process"/>
    <property type="evidence" value="ECO:0007669"/>
    <property type="project" value="UniProtKB-KW"/>
</dbReference>
<dbReference type="GO" id="GO:0045892">
    <property type="term" value="P:negative regulation of DNA-templated transcription"/>
    <property type="evidence" value="ECO:0007669"/>
    <property type="project" value="UniProtKB-UniRule"/>
</dbReference>
<dbReference type="GO" id="GO:0045717">
    <property type="term" value="P:negative regulation of fatty acid biosynthetic process"/>
    <property type="evidence" value="ECO:0007669"/>
    <property type="project" value="UniProtKB-UniRule"/>
</dbReference>
<dbReference type="CDD" id="cd03440">
    <property type="entry name" value="hot_dog"/>
    <property type="match status" value="1"/>
</dbReference>
<dbReference type="Gene3D" id="3.10.129.10">
    <property type="entry name" value="Hotdog Thioesterase"/>
    <property type="match status" value="1"/>
</dbReference>
<dbReference type="Gene3D" id="1.10.10.10">
    <property type="entry name" value="Winged helix-like DNA-binding domain superfamily/Winged helix DNA-binding domain"/>
    <property type="match status" value="1"/>
</dbReference>
<dbReference type="HAMAP" id="MF_01814">
    <property type="entry name" value="Transcrip_fact_FapR"/>
    <property type="match status" value="1"/>
</dbReference>
<dbReference type="InterPro" id="IPR029069">
    <property type="entry name" value="HotDog_dom_sf"/>
</dbReference>
<dbReference type="InterPro" id="IPR006683">
    <property type="entry name" value="Thioestr_dom"/>
</dbReference>
<dbReference type="InterPro" id="IPR017275">
    <property type="entry name" value="Transcription_factor_FapR"/>
</dbReference>
<dbReference type="InterPro" id="IPR036388">
    <property type="entry name" value="WH-like_DNA-bd_sf"/>
</dbReference>
<dbReference type="InterPro" id="IPR036390">
    <property type="entry name" value="WH_DNA-bd_sf"/>
</dbReference>
<dbReference type="NCBIfam" id="NF003359">
    <property type="entry name" value="PRK04424.1"/>
    <property type="match status" value="1"/>
</dbReference>
<dbReference type="Pfam" id="PF03061">
    <property type="entry name" value="4HBT"/>
    <property type="match status" value="1"/>
</dbReference>
<dbReference type="PIRSF" id="PIRSF037733">
    <property type="entry name" value="Transcription_factor_FapR"/>
    <property type="match status" value="1"/>
</dbReference>
<dbReference type="SUPFAM" id="SSF54637">
    <property type="entry name" value="Thioesterase/thiol ester dehydrase-isomerase"/>
    <property type="match status" value="1"/>
</dbReference>
<dbReference type="SUPFAM" id="SSF46785">
    <property type="entry name" value="Winged helix' DNA-binding domain"/>
    <property type="match status" value="1"/>
</dbReference>
<keyword id="KW-0238">DNA-binding</keyword>
<keyword id="KW-0275">Fatty acid biosynthesis</keyword>
<keyword id="KW-0276">Fatty acid metabolism</keyword>
<keyword id="KW-0444">Lipid biosynthesis</keyword>
<keyword id="KW-0443">Lipid metabolism</keyword>
<keyword id="KW-0678">Repressor</keyword>
<keyword id="KW-0804">Transcription</keyword>
<keyword id="KW-0805">Transcription regulation</keyword>
<comment type="function">
    <text evidence="1">Transcriptional factor involved in regulation of membrane lipid biosynthesis by repressing genes involved in fatty acid and phospholipid metabolism.</text>
</comment>
<comment type="similarity">
    <text evidence="1">Belongs to the FapR family.</text>
</comment>